<evidence type="ECO:0000255" key="1">
    <source>
        <dbReference type="HAMAP-Rule" id="MF_01429"/>
    </source>
</evidence>
<dbReference type="EMBL" id="CP000886">
    <property type="protein sequence ID" value="ABX65827.1"/>
    <property type="molecule type" value="Genomic_DNA"/>
</dbReference>
<dbReference type="RefSeq" id="WP_000028952.1">
    <property type="nucleotide sequence ID" value="NC_010102.1"/>
</dbReference>
<dbReference type="SMR" id="A9N1X7"/>
<dbReference type="GeneID" id="66756972"/>
<dbReference type="KEGG" id="spq:SPAB_00392"/>
<dbReference type="PATRIC" id="fig|1016998.12.peg.370"/>
<dbReference type="HOGENOM" id="CLU_069054_5_1_6"/>
<dbReference type="BioCyc" id="SENT1016998:SPAB_RS01610-MONOMER"/>
<dbReference type="Proteomes" id="UP000008556">
    <property type="component" value="Chromosome"/>
</dbReference>
<dbReference type="GO" id="GO:0005829">
    <property type="term" value="C:cytosol"/>
    <property type="evidence" value="ECO:0007669"/>
    <property type="project" value="TreeGrafter"/>
</dbReference>
<dbReference type="GO" id="GO:0051537">
    <property type="term" value="F:2 iron, 2 sulfur cluster binding"/>
    <property type="evidence" value="ECO:0007669"/>
    <property type="project" value="TreeGrafter"/>
</dbReference>
<dbReference type="GO" id="GO:0005506">
    <property type="term" value="F:iron ion binding"/>
    <property type="evidence" value="ECO:0007669"/>
    <property type="project" value="UniProtKB-UniRule"/>
</dbReference>
<dbReference type="GO" id="GO:0016226">
    <property type="term" value="P:iron-sulfur cluster assembly"/>
    <property type="evidence" value="ECO:0007669"/>
    <property type="project" value="UniProtKB-UniRule"/>
</dbReference>
<dbReference type="FunFam" id="2.60.300.12:FF:000001">
    <property type="entry name" value="Iron-binding protein IscA"/>
    <property type="match status" value="1"/>
</dbReference>
<dbReference type="Gene3D" id="2.60.300.12">
    <property type="entry name" value="HesB-like domain"/>
    <property type="match status" value="1"/>
</dbReference>
<dbReference type="HAMAP" id="MF_01429">
    <property type="entry name" value="Fe_S_insert_IscA"/>
    <property type="match status" value="1"/>
</dbReference>
<dbReference type="InterPro" id="IPR050322">
    <property type="entry name" value="Fe-S_cluster_asmbl/transfer"/>
</dbReference>
<dbReference type="InterPro" id="IPR000361">
    <property type="entry name" value="FeS_biogenesis"/>
</dbReference>
<dbReference type="InterPro" id="IPR016092">
    <property type="entry name" value="FeS_cluster_insertion"/>
</dbReference>
<dbReference type="InterPro" id="IPR017870">
    <property type="entry name" value="FeS_cluster_insertion_CS"/>
</dbReference>
<dbReference type="InterPro" id="IPR035903">
    <property type="entry name" value="HesB-like_dom_sf"/>
</dbReference>
<dbReference type="InterPro" id="IPR011302">
    <property type="entry name" value="IscA_proteobacteria"/>
</dbReference>
<dbReference type="NCBIfam" id="TIGR00049">
    <property type="entry name" value="iron-sulfur cluster assembly accessory protein"/>
    <property type="match status" value="1"/>
</dbReference>
<dbReference type="NCBIfam" id="TIGR02011">
    <property type="entry name" value="IscA"/>
    <property type="match status" value="1"/>
</dbReference>
<dbReference type="NCBIfam" id="NF007049">
    <property type="entry name" value="PRK09502.1"/>
    <property type="match status" value="1"/>
</dbReference>
<dbReference type="PANTHER" id="PTHR10072:SF41">
    <property type="entry name" value="IRON-SULFUR CLUSTER ASSEMBLY 1 HOMOLOG, MITOCHONDRIAL"/>
    <property type="match status" value="1"/>
</dbReference>
<dbReference type="PANTHER" id="PTHR10072">
    <property type="entry name" value="IRON-SULFUR CLUSTER ASSEMBLY PROTEIN"/>
    <property type="match status" value="1"/>
</dbReference>
<dbReference type="Pfam" id="PF01521">
    <property type="entry name" value="Fe-S_biosyn"/>
    <property type="match status" value="1"/>
</dbReference>
<dbReference type="SUPFAM" id="SSF89360">
    <property type="entry name" value="HesB-like domain"/>
    <property type="match status" value="1"/>
</dbReference>
<dbReference type="PROSITE" id="PS01152">
    <property type="entry name" value="HESB"/>
    <property type="match status" value="1"/>
</dbReference>
<accession>A9N1X7</accession>
<reference key="1">
    <citation type="submission" date="2007-11" db="EMBL/GenBank/DDBJ databases">
        <authorList>
            <consortium name="The Salmonella enterica serovar Paratyphi B Genome Sequencing Project"/>
            <person name="McClelland M."/>
            <person name="Sanderson E.K."/>
            <person name="Porwollik S."/>
            <person name="Spieth J."/>
            <person name="Clifton W.S."/>
            <person name="Fulton R."/>
            <person name="Cordes M."/>
            <person name="Wollam A."/>
            <person name="Shah N."/>
            <person name="Pepin K."/>
            <person name="Bhonagiri V."/>
            <person name="Nash W."/>
            <person name="Johnson M."/>
            <person name="Thiruvilangam P."/>
            <person name="Wilson R."/>
        </authorList>
    </citation>
    <scope>NUCLEOTIDE SEQUENCE [LARGE SCALE GENOMIC DNA]</scope>
    <source>
        <strain>ATCC BAA-1250 / SPB7</strain>
    </source>
</reference>
<keyword id="KW-0408">Iron</keyword>
<keyword id="KW-0479">Metal-binding</keyword>
<name>ISCA_SALPB</name>
<gene>
    <name evidence="1" type="primary">iscA</name>
    <name type="ordered locus">SPAB_00392</name>
</gene>
<organism>
    <name type="scientific">Salmonella paratyphi B (strain ATCC BAA-1250 / SPB7)</name>
    <dbReference type="NCBI Taxonomy" id="1016998"/>
    <lineage>
        <taxon>Bacteria</taxon>
        <taxon>Pseudomonadati</taxon>
        <taxon>Pseudomonadota</taxon>
        <taxon>Gammaproteobacteria</taxon>
        <taxon>Enterobacterales</taxon>
        <taxon>Enterobacteriaceae</taxon>
        <taxon>Salmonella</taxon>
    </lineage>
</organism>
<protein>
    <recommendedName>
        <fullName evidence="1">Iron-binding protein IscA</fullName>
    </recommendedName>
    <alternativeName>
        <fullName evidence="1">Iron-sulfur cluster assembly protein</fullName>
    </alternativeName>
</protein>
<feature type="chain" id="PRO_1000087431" description="Iron-binding protein IscA">
    <location>
        <begin position="1"/>
        <end position="107"/>
    </location>
</feature>
<feature type="binding site" evidence="1">
    <location>
        <position position="35"/>
    </location>
    <ligand>
        <name>Fe cation</name>
        <dbReference type="ChEBI" id="CHEBI:24875"/>
    </ligand>
</feature>
<feature type="binding site" evidence="1">
    <location>
        <position position="99"/>
    </location>
    <ligand>
        <name>Fe cation</name>
        <dbReference type="ChEBI" id="CHEBI:24875"/>
    </ligand>
</feature>
<feature type="binding site" evidence="1">
    <location>
        <position position="101"/>
    </location>
    <ligand>
        <name>Fe cation</name>
        <dbReference type="ChEBI" id="CHEBI:24875"/>
    </ligand>
</feature>
<sequence length="107" mass="11504">MSITLSDSAAARVNTFLANRGKGFGLRLGVRTSGCSGMAYVLEFVDEPTAEDTVFEDKGVKVVVDGKSLQFLDGTQLDFVKEGLNEGFKFSNPNVKDECGCGESFHV</sequence>
<proteinExistence type="inferred from homology"/>
<comment type="function">
    <text evidence="1">Is able to transfer iron-sulfur clusters to apo-ferredoxin. Multiple cycles of [2Fe2S] cluster formation and transfer are observed, suggesting that IscA acts catalytically. Recruits intracellular free iron so as to provide iron for the assembly of transient iron-sulfur cluster in IscU in the presence of IscS, L-cysteine and the thioredoxin reductase system TrxA/TrxB.</text>
</comment>
<comment type="cofactor">
    <cofactor evidence="1">
        <name>Fe cation</name>
        <dbReference type="ChEBI" id="CHEBI:24875"/>
    </cofactor>
    <text evidence="1">Binds 2 iron ions per dimer. The dimer may bind additional iron ions.</text>
</comment>
<comment type="subunit">
    <text evidence="1">Homodimer; may form tetramers and higher multimers.</text>
</comment>
<comment type="similarity">
    <text evidence="1">Belongs to the HesB/IscA family.</text>
</comment>